<feature type="chain" id="PRO_1000059686" description="Chaperone protein DnaK">
    <location>
        <begin position="1"/>
        <end position="609"/>
    </location>
</feature>
<feature type="region of interest" description="Disordered" evidence="2">
    <location>
        <begin position="576"/>
        <end position="609"/>
    </location>
</feature>
<feature type="compositionally biased region" description="Low complexity" evidence="2">
    <location>
        <begin position="576"/>
        <end position="593"/>
    </location>
</feature>
<feature type="compositionally biased region" description="Acidic residues" evidence="2">
    <location>
        <begin position="600"/>
        <end position="609"/>
    </location>
</feature>
<feature type="modified residue" description="Phosphothreonine; by autocatalysis" evidence="1">
    <location>
        <position position="173"/>
    </location>
</feature>
<name>DNAK_STRSV</name>
<organism>
    <name type="scientific">Streptococcus sanguinis (strain SK36)</name>
    <dbReference type="NCBI Taxonomy" id="388919"/>
    <lineage>
        <taxon>Bacteria</taxon>
        <taxon>Bacillati</taxon>
        <taxon>Bacillota</taxon>
        <taxon>Bacilli</taxon>
        <taxon>Lactobacillales</taxon>
        <taxon>Streptococcaceae</taxon>
        <taxon>Streptococcus</taxon>
    </lineage>
</organism>
<evidence type="ECO:0000255" key="1">
    <source>
        <dbReference type="HAMAP-Rule" id="MF_00332"/>
    </source>
</evidence>
<evidence type="ECO:0000256" key="2">
    <source>
        <dbReference type="SAM" id="MobiDB-lite"/>
    </source>
</evidence>
<comment type="function">
    <text evidence="1">Acts as a chaperone.</text>
</comment>
<comment type="induction">
    <text evidence="1">By stress conditions e.g. heat shock.</text>
</comment>
<comment type="similarity">
    <text evidence="1">Belongs to the heat shock protein 70 family.</text>
</comment>
<reference key="1">
    <citation type="journal article" date="2007" name="J. Bacteriol.">
        <title>Genome of the opportunistic pathogen Streptococcus sanguinis.</title>
        <authorList>
            <person name="Xu P."/>
            <person name="Alves J.M."/>
            <person name="Kitten T."/>
            <person name="Brown A."/>
            <person name="Chen Z."/>
            <person name="Ozaki L.S."/>
            <person name="Manque P."/>
            <person name="Ge X."/>
            <person name="Serrano M.G."/>
            <person name="Puiu D."/>
            <person name="Hendricks S."/>
            <person name="Wang Y."/>
            <person name="Chaplin M.D."/>
            <person name="Akan D."/>
            <person name="Paik S."/>
            <person name="Peterson D.L."/>
            <person name="Macrina F.L."/>
            <person name="Buck G.A."/>
        </authorList>
    </citation>
    <scope>NUCLEOTIDE SEQUENCE [LARGE SCALE GENOMIC DNA]</scope>
    <source>
        <strain>SK36</strain>
    </source>
</reference>
<keyword id="KW-0067">ATP-binding</keyword>
<keyword id="KW-0143">Chaperone</keyword>
<keyword id="KW-0547">Nucleotide-binding</keyword>
<keyword id="KW-0597">Phosphoprotein</keyword>
<keyword id="KW-1185">Reference proteome</keyword>
<keyword id="KW-0346">Stress response</keyword>
<dbReference type="EMBL" id="CP000387">
    <property type="protein sequence ID" value="ABN45377.1"/>
    <property type="molecule type" value="Genomic_DNA"/>
</dbReference>
<dbReference type="RefSeq" id="WP_011837493.1">
    <property type="nucleotide sequence ID" value="NC_009009.1"/>
</dbReference>
<dbReference type="RefSeq" id="YP_001035927.1">
    <property type="nucleotide sequence ID" value="NC_009009.1"/>
</dbReference>
<dbReference type="SMR" id="A3CQC2"/>
<dbReference type="STRING" id="388919.SSA_2007"/>
<dbReference type="KEGG" id="ssa:SSA_2007"/>
<dbReference type="PATRIC" id="fig|388919.9.peg.1902"/>
<dbReference type="eggNOG" id="COG0443">
    <property type="taxonomic scope" value="Bacteria"/>
</dbReference>
<dbReference type="HOGENOM" id="CLU_005965_2_4_9"/>
<dbReference type="OrthoDB" id="9766019at2"/>
<dbReference type="Proteomes" id="UP000002148">
    <property type="component" value="Chromosome"/>
</dbReference>
<dbReference type="GO" id="GO:0005524">
    <property type="term" value="F:ATP binding"/>
    <property type="evidence" value="ECO:0007669"/>
    <property type="project" value="UniProtKB-UniRule"/>
</dbReference>
<dbReference type="GO" id="GO:0140662">
    <property type="term" value="F:ATP-dependent protein folding chaperone"/>
    <property type="evidence" value="ECO:0007669"/>
    <property type="project" value="InterPro"/>
</dbReference>
<dbReference type="GO" id="GO:0051082">
    <property type="term" value="F:unfolded protein binding"/>
    <property type="evidence" value="ECO:0007669"/>
    <property type="project" value="InterPro"/>
</dbReference>
<dbReference type="CDD" id="cd10234">
    <property type="entry name" value="ASKHA_NBD_HSP70_DnaK-like"/>
    <property type="match status" value="1"/>
</dbReference>
<dbReference type="FunFam" id="2.60.34.10:FF:000014">
    <property type="entry name" value="Chaperone protein DnaK HSP70"/>
    <property type="match status" value="1"/>
</dbReference>
<dbReference type="FunFam" id="1.20.1270.10:FF:000004">
    <property type="entry name" value="Molecular chaperone DnaK"/>
    <property type="match status" value="1"/>
</dbReference>
<dbReference type="FunFam" id="3.30.420.40:FF:000071">
    <property type="entry name" value="Molecular chaperone DnaK"/>
    <property type="match status" value="1"/>
</dbReference>
<dbReference type="FunFam" id="3.90.640.10:FF:000003">
    <property type="entry name" value="Molecular chaperone DnaK"/>
    <property type="match status" value="1"/>
</dbReference>
<dbReference type="Gene3D" id="1.20.1270.10">
    <property type="match status" value="1"/>
</dbReference>
<dbReference type="Gene3D" id="3.30.420.40">
    <property type="match status" value="2"/>
</dbReference>
<dbReference type="Gene3D" id="3.90.640.10">
    <property type="entry name" value="Actin, Chain A, domain 4"/>
    <property type="match status" value="1"/>
</dbReference>
<dbReference type="Gene3D" id="2.60.34.10">
    <property type="entry name" value="Substrate Binding Domain Of DNAk, Chain A, domain 1"/>
    <property type="match status" value="1"/>
</dbReference>
<dbReference type="HAMAP" id="MF_00332">
    <property type="entry name" value="DnaK"/>
    <property type="match status" value="1"/>
</dbReference>
<dbReference type="InterPro" id="IPR043129">
    <property type="entry name" value="ATPase_NBD"/>
</dbReference>
<dbReference type="InterPro" id="IPR012725">
    <property type="entry name" value="Chaperone_DnaK"/>
</dbReference>
<dbReference type="InterPro" id="IPR018181">
    <property type="entry name" value="Heat_shock_70_CS"/>
</dbReference>
<dbReference type="InterPro" id="IPR029048">
    <property type="entry name" value="HSP70_C_sf"/>
</dbReference>
<dbReference type="InterPro" id="IPR029047">
    <property type="entry name" value="HSP70_peptide-bd_sf"/>
</dbReference>
<dbReference type="InterPro" id="IPR013126">
    <property type="entry name" value="Hsp_70_fam"/>
</dbReference>
<dbReference type="NCBIfam" id="NF001413">
    <property type="entry name" value="PRK00290.1"/>
    <property type="match status" value="1"/>
</dbReference>
<dbReference type="NCBIfam" id="TIGR02350">
    <property type="entry name" value="prok_dnaK"/>
    <property type="match status" value="1"/>
</dbReference>
<dbReference type="PANTHER" id="PTHR19375">
    <property type="entry name" value="HEAT SHOCK PROTEIN 70KDA"/>
    <property type="match status" value="1"/>
</dbReference>
<dbReference type="Pfam" id="PF00012">
    <property type="entry name" value="HSP70"/>
    <property type="match status" value="1"/>
</dbReference>
<dbReference type="PRINTS" id="PR00301">
    <property type="entry name" value="HEATSHOCK70"/>
</dbReference>
<dbReference type="SUPFAM" id="SSF53067">
    <property type="entry name" value="Actin-like ATPase domain"/>
    <property type="match status" value="2"/>
</dbReference>
<dbReference type="SUPFAM" id="SSF100934">
    <property type="entry name" value="Heat shock protein 70kD (HSP70), C-terminal subdomain"/>
    <property type="match status" value="1"/>
</dbReference>
<dbReference type="SUPFAM" id="SSF100920">
    <property type="entry name" value="Heat shock protein 70kD (HSP70), peptide-binding domain"/>
    <property type="match status" value="1"/>
</dbReference>
<dbReference type="PROSITE" id="PS00297">
    <property type="entry name" value="HSP70_1"/>
    <property type="match status" value="1"/>
</dbReference>
<dbReference type="PROSITE" id="PS00329">
    <property type="entry name" value="HSP70_2"/>
    <property type="match status" value="1"/>
</dbReference>
<dbReference type="PROSITE" id="PS01036">
    <property type="entry name" value="HSP70_3"/>
    <property type="match status" value="1"/>
</dbReference>
<protein>
    <recommendedName>
        <fullName evidence="1">Chaperone protein DnaK</fullName>
    </recommendedName>
    <alternativeName>
        <fullName evidence="1">HSP70</fullName>
    </alternativeName>
    <alternativeName>
        <fullName evidence="1">Heat shock 70 kDa protein</fullName>
    </alternativeName>
    <alternativeName>
        <fullName evidence="1">Heat shock protein 70</fullName>
    </alternativeName>
</protein>
<accession>A3CQC2</accession>
<sequence>MSKIIGIDLGTTNSAVAVLEGTESKIIANPEGNRTTPSVVSFKNGEIIVGDAAKRQAVTNPDTIISIKSKMGTSEKVAANGKEYTPQEISAMILQYLKGYAEEYLGEKVTKAVITVPAYFNDAQRQATKDAGKIAGLEVERIVNEPTAAALAYGLDKQDKEEKILVFDLGGGTFDVSILELGDGVFDVLATAGDNKLGGDDFDQKIIDHMVAEFKKENGIDLSNDKMALQRLKDAAEKAKKDLSGVTSTQISLPFITAGDAGPLHLEMTLTRAKFDDLTRDLVERTKEPVRRALSDAGLSLSEIDEVILVGGSTRIPAVVEAVKAETGKEPNKSVNPDEVVAMGAAIQGGVITGDVKDVVLLDVTPLSLGIETMGGVFTKLIDRNTTIPTSKSQVFSTAADNQPAVDIHVLQGERPMAADNKTLGRFQLTDIPAAPRGIPQIEVTFDIDKNGIVSVKAKDLGTQKEQHIVIQSNSGLTDEEIDRMMKDAEANAEADKKRKEEVDLRNEVDQAIFATEKTIKETEGKGFDAERNAAQAALDELKKAQEDNNLDDMKAKLEALNEKAQALAVKLYEQAAAAQQAQAGAEGAENAGSTKADDDVVDGEFTEK</sequence>
<gene>
    <name evidence="1" type="primary">dnaK</name>
    <name type="ordered locus">SSA_2007</name>
</gene>
<proteinExistence type="inferred from homology"/>